<comment type="function">
    <text evidence="1">Involved in mRNA degradation. Catalyzes the phosphorolysis of single-stranded polyribonucleotides processively in the 3'- to 5'-direction.</text>
</comment>
<comment type="catalytic activity">
    <reaction evidence="1">
        <text>RNA(n+1) + phosphate = RNA(n) + a ribonucleoside 5'-diphosphate</text>
        <dbReference type="Rhea" id="RHEA:22096"/>
        <dbReference type="Rhea" id="RHEA-COMP:14527"/>
        <dbReference type="Rhea" id="RHEA-COMP:17342"/>
        <dbReference type="ChEBI" id="CHEBI:43474"/>
        <dbReference type="ChEBI" id="CHEBI:57930"/>
        <dbReference type="ChEBI" id="CHEBI:140395"/>
        <dbReference type="EC" id="2.7.7.8"/>
    </reaction>
</comment>
<comment type="cofactor">
    <cofactor evidence="1">
        <name>Mg(2+)</name>
        <dbReference type="ChEBI" id="CHEBI:18420"/>
    </cofactor>
</comment>
<comment type="subcellular location">
    <subcellularLocation>
        <location evidence="1">Cytoplasm</location>
    </subcellularLocation>
</comment>
<comment type="similarity">
    <text evidence="1">Belongs to the polyribonucleotide nucleotidyltransferase family.</text>
</comment>
<feature type="chain" id="PRO_0000381901" description="Polyribonucleotide nucleotidyltransferase">
    <location>
        <begin position="1"/>
        <end position="688"/>
    </location>
</feature>
<feature type="domain" description="KH" evidence="1">
    <location>
        <begin position="550"/>
        <end position="609"/>
    </location>
</feature>
<feature type="domain" description="S1 motif" evidence="1">
    <location>
        <begin position="626"/>
        <end position="688"/>
    </location>
</feature>
<feature type="binding site" evidence="1">
    <location>
        <position position="484"/>
    </location>
    <ligand>
        <name>Mg(2+)</name>
        <dbReference type="ChEBI" id="CHEBI:18420"/>
    </ligand>
</feature>
<feature type="binding site" evidence="1">
    <location>
        <position position="490"/>
    </location>
    <ligand>
        <name>Mg(2+)</name>
        <dbReference type="ChEBI" id="CHEBI:18420"/>
    </ligand>
</feature>
<dbReference type="EC" id="2.7.7.8" evidence="1"/>
<dbReference type="EMBL" id="CP001173">
    <property type="protein sequence ID" value="ACI27909.1"/>
    <property type="molecule type" value="Genomic_DNA"/>
</dbReference>
<dbReference type="RefSeq" id="WP_000345848.1">
    <property type="nucleotide sequence ID" value="NC_011333.1"/>
</dbReference>
<dbReference type="SMR" id="B5Z8L0"/>
<dbReference type="KEGG" id="hpg:HPG27_1159"/>
<dbReference type="HOGENOM" id="CLU_004217_2_2_7"/>
<dbReference type="Proteomes" id="UP000001735">
    <property type="component" value="Chromosome"/>
</dbReference>
<dbReference type="GO" id="GO:0005829">
    <property type="term" value="C:cytosol"/>
    <property type="evidence" value="ECO:0007669"/>
    <property type="project" value="TreeGrafter"/>
</dbReference>
<dbReference type="GO" id="GO:0000175">
    <property type="term" value="F:3'-5'-RNA exonuclease activity"/>
    <property type="evidence" value="ECO:0007669"/>
    <property type="project" value="TreeGrafter"/>
</dbReference>
<dbReference type="GO" id="GO:0000287">
    <property type="term" value="F:magnesium ion binding"/>
    <property type="evidence" value="ECO:0007669"/>
    <property type="project" value="UniProtKB-UniRule"/>
</dbReference>
<dbReference type="GO" id="GO:0004654">
    <property type="term" value="F:polyribonucleotide nucleotidyltransferase activity"/>
    <property type="evidence" value="ECO:0007669"/>
    <property type="project" value="UniProtKB-UniRule"/>
</dbReference>
<dbReference type="GO" id="GO:0003723">
    <property type="term" value="F:RNA binding"/>
    <property type="evidence" value="ECO:0007669"/>
    <property type="project" value="UniProtKB-UniRule"/>
</dbReference>
<dbReference type="GO" id="GO:0006402">
    <property type="term" value="P:mRNA catabolic process"/>
    <property type="evidence" value="ECO:0007669"/>
    <property type="project" value="UniProtKB-UniRule"/>
</dbReference>
<dbReference type="GO" id="GO:0006396">
    <property type="term" value="P:RNA processing"/>
    <property type="evidence" value="ECO:0007669"/>
    <property type="project" value="InterPro"/>
</dbReference>
<dbReference type="CDD" id="cd02393">
    <property type="entry name" value="KH-I_PNPase"/>
    <property type="match status" value="1"/>
</dbReference>
<dbReference type="CDD" id="cd11364">
    <property type="entry name" value="RNase_PH_PNPase_2"/>
    <property type="match status" value="1"/>
</dbReference>
<dbReference type="FunFam" id="3.30.1370.10:FF:000001">
    <property type="entry name" value="Polyribonucleotide nucleotidyltransferase"/>
    <property type="match status" value="1"/>
</dbReference>
<dbReference type="FunFam" id="3.30.230.70:FF:000026">
    <property type="entry name" value="Polyribonucleotide nucleotidyltransferase"/>
    <property type="match status" value="1"/>
</dbReference>
<dbReference type="FunFam" id="3.30.230.70:FF:000029">
    <property type="entry name" value="Polyribonucleotide nucleotidyltransferase"/>
    <property type="match status" value="1"/>
</dbReference>
<dbReference type="Gene3D" id="3.30.230.70">
    <property type="entry name" value="GHMP Kinase, N-terminal domain"/>
    <property type="match status" value="2"/>
</dbReference>
<dbReference type="Gene3D" id="3.30.1370.10">
    <property type="entry name" value="K Homology domain, type 1"/>
    <property type="match status" value="1"/>
</dbReference>
<dbReference type="Gene3D" id="2.40.50.140">
    <property type="entry name" value="Nucleic acid-binding proteins"/>
    <property type="match status" value="1"/>
</dbReference>
<dbReference type="HAMAP" id="MF_01595">
    <property type="entry name" value="PNPase"/>
    <property type="match status" value="1"/>
</dbReference>
<dbReference type="InterPro" id="IPR001247">
    <property type="entry name" value="ExoRNase_PH_dom1"/>
</dbReference>
<dbReference type="InterPro" id="IPR015847">
    <property type="entry name" value="ExoRNase_PH_dom2"/>
</dbReference>
<dbReference type="InterPro" id="IPR036345">
    <property type="entry name" value="ExoRNase_PH_dom2_sf"/>
</dbReference>
<dbReference type="InterPro" id="IPR004087">
    <property type="entry name" value="KH_dom"/>
</dbReference>
<dbReference type="InterPro" id="IPR004088">
    <property type="entry name" value="KH_dom_type_1"/>
</dbReference>
<dbReference type="InterPro" id="IPR036612">
    <property type="entry name" value="KH_dom_type_1_sf"/>
</dbReference>
<dbReference type="InterPro" id="IPR012340">
    <property type="entry name" value="NA-bd_OB-fold"/>
</dbReference>
<dbReference type="InterPro" id="IPR012162">
    <property type="entry name" value="PNPase"/>
</dbReference>
<dbReference type="InterPro" id="IPR027408">
    <property type="entry name" value="PNPase/RNase_PH_dom_sf"/>
</dbReference>
<dbReference type="InterPro" id="IPR036456">
    <property type="entry name" value="PNPase_PH_RNA-bd_sf"/>
</dbReference>
<dbReference type="InterPro" id="IPR020568">
    <property type="entry name" value="Ribosomal_Su5_D2-typ_SF"/>
</dbReference>
<dbReference type="InterPro" id="IPR003029">
    <property type="entry name" value="S1_domain"/>
</dbReference>
<dbReference type="NCBIfam" id="TIGR03591">
    <property type="entry name" value="polynuc_phos"/>
    <property type="match status" value="1"/>
</dbReference>
<dbReference type="NCBIfam" id="NF008805">
    <property type="entry name" value="PRK11824.1"/>
    <property type="match status" value="1"/>
</dbReference>
<dbReference type="PANTHER" id="PTHR11252">
    <property type="entry name" value="POLYRIBONUCLEOTIDE NUCLEOTIDYLTRANSFERASE"/>
    <property type="match status" value="1"/>
</dbReference>
<dbReference type="PANTHER" id="PTHR11252:SF0">
    <property type="entry name" value="POLYRIBONUCLEOTIDE NUCLEOTIDYLTRANSFERASE 1, MITOCHONDRIAL"/>
    <property type="match status" value="1"/>
</dbReference>
<dbReference type="Pfam" id="PF00013">
    <property type="entry name" value="KH_1"/>
    <property type="match status" value="1"/>
</dbReference>
<dbReference type="Pfam" id="PF01138">
    <property type="entry name" value="RNase_PH"/>
    <property type="match status" value="2"/>
</dbReference>
<dbReference type="Pfam" id="PF03725">
    <property type="entry name" value="RNase_PH_C"/>
    <property type="match status" value="2"/>
</dbReference>
<dbReference type="Pfam" id="PF00575">
    <property type="entry name" value="S1"/>
    <property type="match status" value="1"/>
</dbReference>
<dbReference type="PIRSF" id="PIRSF005499">
    <property type="entry name" value="PNPase"/>
    <property type="match status" value="1"/>
</dbReference>
<dbReference type="SMART" id="SM00322">
    <property type="entry name" value="KH"/>
    <property type="match status" value="1"/>
</dbReference>
<dbReference type="SMART" id="SM00316">
    <property type="entry name" value="S1"/>
    <property type="match status" value="1"/>
</dbReference>
<dbReference type="SUPFAM" id="SSF54791">
    <property type="entry name" value="Eukaryotic type KH-domain (KH-domain type I)"/>
    <property type="match status" value="1"/>
</dbReference>
<dbReference type="SUPFAM" id="SSF50249">
    <property type="entry name" value="Nucleic acid-binding proteins"/>
    <property type="match status" value="1"/>
</dbReference>
<dbReference type="SUPFAM" id="SSF46915">
    <property type="entry name" value="Polynucleotide phosphorylase/guanosine pentaphosphate synthase (PNPase/GPSI), domain 3"/>
    <property type="match status" value="1"/>
</dbReference>
<dbReference type="SUPFAM" id="SSF55666">
    <property type="entry name" value="Ribonuclease PH domain 2-like"/>
    <property type="match status" value="2"/>
</dbReference>
<dbReference type="SUPFAM" id="SSF54211">
    <property type="entry name" value="Ribosomal protein S5 domain 2-like"/>
    <property type="match status" value="2"/>
</dbReference>
<dbReference type="PROSITE" id="PS50084">
    <property type="entry name" value="KH_TYPE_1"/>
    <property type="match status" value="1"/>
</dbReference>
<dbReference type="PROSITE" id="PS50126">
    <property type="entry name" value="S1"/>
    <property type="match status" value="1"/>
</dbReference>
<sequence length="688" mass="77163">MDFITINSSNKTEEFALKQVAKQATSSLMYRLGKTIILASVCVEREPVSEDFLPLVVQFLEKSYAAGKIPGGFVKREGRAQDFEILTSRLIDRTFRPLFPKDYRYPTQITLMVLSHDIENDLQVSALNAASVALFLAHIAPIKSVSACRIARIDDEFIINPNTSLLNQSSLDLFVSGTKESLNMIEMRSLGQKLNALEEPLMLKALELAQKSLKETCTLYEEVFTPHQNELLFKESQGIIFNERLLDLLKNQYFDEIIKGIESSALSERENVFHEIAKKISEAHSEFSLEEIEWSLEKVKKTEIRRMIIQDKIRPDKRALEEVRPILIESDLLPMAHSSILFTRGQTQSLVVGVLGTDNDAQTHESLEHKTPIKERFMFHYNFPPFCVGEASSIGAASRRELGHGNLAKRALETSIKNKEQVIRLVSEILESNGSSSMASVCAGSLALYASGVEIHDLVAGVAMGMVSEGQDYAILSDISGLEDAEGDMDFKIAGNLEGITAMQMDTKMSGIQLEILYQALLQAKEARKHILKIMHEAKEKIVINFSHLPTTEIFNVAPDKIVEIIGQGGRVIKEIVEKFEVKIDLNKPSGEVKIMGNKERVLKTKEFILNYLHSLDQELEQYTIDEVLEAQVKRIVDFGAFLSLPKGGEGLLRKQNMDRCQVVLREGDSIRCRVISFNKGKIALDLA</sequence>
<evidence type="ECO:0000255" key="1">
    <source>
        <dbReference type="HAMAP-Rule" id="MF_01595"/>
    </source>
</evidence>
<organism>
    <name type="scientific">Helicobacter pylori (strain G27)</name>
    <dbReference type="NCBI Taxonomy" id="563041"/>
    <lineage>
        <taxon>Bacteria</taxon>
        <taxon>Pseudomonadati</taxon>
        <taxon>Campylobacterota</taxon>
        <taxon>Epsilonproteobacteria</taxon>
        <taxon>Campylobacterales</taxon>
        <taxon>Helicobacteraceae</taxon>
        <taxon>Helicobacter</taxon>
    </lineage>
</organism>
<protein>
    <recommendedName>
        <fullName evidence="1">Polyribonucleotide nucleotidyltransferase</fullName>
        <ecNumber evidence="1">2.7.7.8</ecNumber>
    </recommendedName>
    <alternativeName>
        <fullName evidence="1">Polynucleotide phosphorylase</fullName>
        <shortName evidence="1">PNPase</shortName>
    </alternativeName>
</protein>
<name>PNP_HELPG</name>
<keyword id="KW-0963">Cytoplasm</keyword>
<keyword id="KW-0460">Magnesium</keyword>
<keyword id="KW-0479">Metal-binding</keyword>
<keyword id="KW-0548">Nucleotidyltransferase</keyword>
<keyword id="KW-1185">Reference proteome</keyword>
<keyword id="KW-0694">RNA-binding</keyword>
<keyword id="KW-0808">Transferase</keyword>
<proteinExistence type="inferred from homology"/>
<reference key="1">
    <citation type="journal article" date="2009" name="J. Bacteriol.">
        <title>The complete genome sequence of Helicobacter pylori strain G27.</title>
        <authorList>
            <person name="Baltrus D.A."/>
            <person name="Amieva M.R."/>
            <person name="Covacci A."/>
            <person name="Lowe T.M."/>
            <person name="Merrell D.S."/>
            <person name="Ottemann K.M."/>
            <person name="Stein M."/>
            <person name="Salama N.R."/>
            <person name="Guillemin K."/>
        </authorList>
    </citation>
    <scope>NUCLEOTIDE SEQUENCE [LARGE SCALE GENOMIC DNA]</scope>
    <source>
        <strain>G27</strain>
    </source>
</reference>
<accession>B5Z8L0</accession>
<gene>
    <name evidence="1" type="primary">pnp</name>
    <name type="ordered locus">HPG27_1159</name>
</gene>